<protein>
    <recommendedName>
        <fullName evidence="1">Large ribosomal subunit protein bL19</fullName>
    </recommendedName>
    <alternativeName>
        <fullName evidence="2">50S ribosomal protein L19</fullName>
    </alternativeName>
</protein>
<comment type="function">
    <text evidence="1">This protein is located at the 30S-50S ribosomal subunit interface and may play a role in the structure and function of the aminoacyl-tRNA binding site.</text>
</comment>
<comment type="similarity">
    <text evidence="1">Belongs to the bacterial ribosomal protein bL19 family.</text>
</comment>
<organism>
    <name type="scientific">Acinetobacter baumannii (strain AB307-0294)</name>
    <dbReference type="NCBI Taxonomy" id="557600"/>
    <lineage>
        <taxon>Bacteria</taxon>
        <taxon>Pseudomonadati</taxon>
        <taxon>Pseudomonadota</taxon>
        <taxon>Gammaproteobacteria</taxon>
        <taxon>Moraxellales</taxon>
        <taxon>Moraxellaceae</taxon>
        <taxon>Acinetobacter</taxon>
        <taxon>Acinetobacter calcoaceticus/baumannii complex</taxon>
    </lineage>
</organism>
<evidence type="ECO:0000255" key="1">
    <source>
        <dbReference type="HAMAP-Rule" id="MF_00402"/>
    </source>
</evidence>
<evidence type="ECO:0000305" key="2"/>
<gene>
    <name evidence="1" type="primary">rplS</name>
    <name type="ordered locus">ABBFA_000351</name>
</gene>
<name>RL19_ACIB3</name>
<reference key="1">
    <citation type="journal article" date="2008" name="J. Bacteriol.">
        <title>Comparative genome sequence analysis of multidrug-resistant Acinetobacter baumannii.</title>
        <authorList>
            <person name="Adams M.D."/>
            <person name="Goglin K."/>
            <person name="Molyneaux N."/>
            <person name="Hujer K.M."/>
            <person name="Lavender H."/>
            <person name="Jamison J.J."/>
            <person name="MacDonald I.J."/>
            <person name="Martin K.M."/>
            <person name="Russo T."/>
            <person name="Campagnari A.A."/>
            <person name="Hujer A.M."/>
            <person name="Bonomo R.A."/>
            <person name="Gill S.R."/>
        </authorList>
    </citation>
    <scope>NUCLEOTIDE SEQUENCE [LARGE SCALE GENOMIC DNA]</scope>
    <source>
        <strain>AB307-0294</strain>
    </source>
</reference>
<keyword id="KW-0687">Ribonucleoprotein</keyword>
<keyword id="KW-0689">Ribosomal protein</keyword>
<dbReference type="EMBL" id="CP001172">
    <property type="protein sequence ID" value="ACJ58584.1"/>
    <property type="molecule type" value="Genomic_DNA"/>
</dbReference>
<dbReference type="RefSeq" id="WP_000014562.1">
    <property type="nucleotide sequence ID" value="NZ_CP001172.1"/>
</dbReference>
<dbReference type="SMR" id="B7GVS1"/>
<dbReference type="GeneID" id="92895396"/>
<dbReference type="HOGENOM" id="CLU_103507_2_2_6"/>
<dbReference type="Proteomes" id="UP000006924">
    <property type="component" value="Chromosome"/>
</dbReference>
<dbReference type="GO" id="GO:0022625">
    <property type="term" value="C:cytosolic large ribosomal subunit"/>
    <property type="evidence" value="ECO:0007669"/>
    <property type="project" value="TreeGrafter"/>
</dbReference>
<dbReference type="GO" id="GO:0003735">
    <property type="term" value="F:structural constituent of ribosome"/>
    <property type="evidence" value="ECO:0007669"/>
    <property type="project" value="InterPro"/>
</dbReference>
<dbReference type="GO" id="GO:0006412">
    <property type="term" value="P:translation"/>
    <property type="evidence" value="ECO:0007669"/>
    <property type="project" value="UniProtKB-UniRule"/>
</dbReference>
<dbReference type="FunFam" id="2.30.30.790:FF:000001">
    <property type="entry name" value="50S ribosomal protein L19"/>
    <property type="match status" value="1"/>
</dbReference>
<dbReference type="Gene3D" id="2.30.30.790">
    <property type="match status" value="1"/>
</dbReference>
<dbReference type="HAMAP" id="MF_00402">
    <property type="entry name" value="Ribosomal_bL19"/>
    <property type="match status" value="1"/>
</dbReference>
<dbReference type="InterPro" id="IPR001857">
    <property type="entry name" value="Ribosomal_bL19"/>
</dbReference>
<dbReference type="InterPro" id="IPR018257">
    <property type="entry name" value="Ribosomal_bL19_CS"/>
</dbReference>
<dbReference type="InterPro" id="IPR038657">
    <property type="entry name" value="Ribosomal_bL19_sf"/>
</dbReference>
<dbReference type="InterPro" id="IPR008991">
    <property type="entry name" value="Translation_prot_SH3-like_sf"/>
</dbReference>
<dbReference type="NCBIfam" id="TIGR01024">
    <property type="entry name" value="rplS_bact"/>
    <property type="match status" value="1"/>
</dbReference>
<dbReference type="PANTHER" id="PTHR15680:SF9">
    <property type="entry name" value="LARGE RIBOSOMAL SUBUNIT PROTEIN BL19M"/>
    <property type="match status" value="1"/>
</dbReference>
<dbReference type="PANTHER" id="PTHR15680">
    <property type="entry name" value="RIBOSOMAL PROTEIN L19"/>
    <property type="match status" value="1"/>
</dbReference>
<dbReference type="Pfam" id="PF01245">
    <property type="entry name" value="Ribosomal_L19"/>
    <property type="match status" value="1"/>
</dbReference>
<dbReference type="PIRSF" id="PIRSF002191">
    <property type="entry name" value="Ribosomal_L19"/>
    <property type="match status" value="1"/>
</dbReference>
<dbReference type="PRINTS" id="PR00061">
    <property type="entry name" value="RIBOSOMALL19"/>
</dbReference>
<dbReference type="SUPFAM" id="SSF50104">
    <property type="entry name" value="Translation proteins SH3-like domain"/>
    <property type="match status" value="1"/>
</dbReference>
<dbReference type="PROSITE" id="PS01015">
    <property type="entry name" value="RIBOSOMAL_L19"/>
    <property type="match status" value="1"/>
</dbReference>
<feature type="chain" id="PRO_1000193776" description="Large ribosomal subunit protein bL19">
    <location>
        <begin position="1"/>
        <end position="122"/>
    </location>
</feature>
<sequence>MSGKHPLVQAIENSQLKTDLPEFAPGDTVVVQVKVKEGDRERLQAFEGVVIAKKNRGLNSAFTVRKISSGVGVERVFQTHSPVVAKIEVKRRGDVRRAKLYYLRDLSGKAARIREKLPARKA</sequence>
<accession>B7GVS1</accession>
<proteinExistence type="inferred from homology"/>